<gene>
    <name evidence="1" type="primary">leuD</name>
    <name type="ordered locus">ACICU_00426</name>
</gene>
<organism>
    <name type="scientific">Acinetobacter baumannii (strain ACICU)</name>
    <dbReference type="NCBI Taxonomy" id="405416"/>
    <lineage>
        <taxon>Bacteria</taxon>
        <taxon>Pseudomonadati</taxon>
        <taxon>Pseudomonadota</taxon>
        <taxon>Gammaproteobacteria</taxon>
        <taxon>Moraxellales</taxon>
        <taxon>Moraxellaceae</taxon>
        <taxon>Acinetobacter</taxon>
        <taxon>Acinetobacter calcoaceticus/baumannii complex</taxon>
    </lineage>
</organism>
<reference key="1">
    <citation type="journal article" date="2008" name="Antimicrob. Agents Chemother.">
        <title>Whole-genome pyrosequencing of an epidemic multidrug-resistant Acinetobacter baumannii strain belonging to the European clone II group.</title>
        <authorList>
            <person name="Iacono M."/>
            <person name="Villa L."/>
            <person name="Fortini D."/>
            <person name="Bordoni R."/>
            <person name="Imperi F."/>
            <person name="Bonnal R.J."/>
            <person name="Sicheritz-Ponten T."/>
            <person name="De Bellis G."/>
            <person name="Visca P."/>
            <person name="Cassone A."/>
            <person name="Carattoli A."/>
        </authorList>
    </citation>
    <scope>NUCLEOTIDE SEQUENCE [LARGE SCALE GENOMIC DNA]</scope>
    <source>
        <strain>ACICU</strain>
    </source>
</reference>
<name>LEUD_ACIBC</name>
<keyword id="KW-0028">Amino-acid biosynthesis</keyword>
<keyword id="KW-0100">Branched-chain amino acid biosynthesis</keyword>
<keyword id="KW-0432">Leucine biosynthesis</keyword>
<keyword id="KW-0456">Lyase</keyword>
<dbReference type="EC" id="4.2.1.33" evidence="1"/>
<dbReference type="EMBL" id="CP000863">
    <property type="protein sequence ID" value="ACC55738.1"/>
    <property type="molecule type" value="Genomic_DNA"/>
</dbReference>
<dbReference type="RefSeq" id="WP_000649450.1">
    <property type="nucleotide sequence ID" value="NZ_CP031380.1"/>
</dbReference>
<dbReference type="SMR" id="B2I360"/>
<dbReference type="GeneID" id="92892410"/>
<dbReference type="KEGG" id="abc:ACICU_00426"/>
<dbReference type="HOGENOM" id="CLU_081378_0_3_6"/>
<dbReference type="UniPathway" id="UPA00048">
    <property type="reaction ID" value="UER00071"/>
</dbReference>
<dbReference type="Proteomes" id="UP000008839">
    <property type="component" value="Chromosome"/>
</dbReference>
<dbReference type="GO" id="GO:0009316">
    <property type="term" value="C:3-isopropylmalate dehydratase complex"/>
    <property type="evidence" value="ECO:0007669"/>
    <property type="project" value="InterPro"/>
</dbReference>
<dbReference type="GO" id="GO:0003861">
    <property type="term" value="F:3-isopropylmalate dehydratase activity"/>
    <property type="evidence" value="ECO:0007669"/>
    <property type="project" value="UniProtKB-UniRule"/>
</dbReference>
<dbReference type="GO" id="GO:0009098">
    <property type="term" value="P:L-leucine biosynthetic process"/>
    <property type="evidence" value="ECO:0007669"/>
    <property type="project" value="UniProtKB-UniRule"/>
</dbReference>
<dbReference type="CDD" id="cd01577">
    <property type="entry name" value="IPMI_Swivel"/>
    <property type="match status" value="1"/>
</dbReference>
<dbReference type="FunFam" id="3.20.19.10:FF:000003">
    <property type="entry name" value="3-isopropylmalate dehydratase small subunit"/>
    <property type="match status" value="1"/>
</dbReference>
<dbReference type="Gene3D" id="3.20.19.10">
    <property type="entry name" value="Aconitase, domain 4"/>
    <property type="match status" value="1"/>
</dbReference>
<dbReference type="HAMAP" id="MF_01031">
    <property type="entry name" value="LeuD_type1"/>
    <property type="match status" value="1"/>
</dbReference>
<dbReference type="InterPro" id="IPR004431">
    <property type="entry name" value="3-IsopropMal_deHydase_ssu"/>
</dbReference>
<dbReference type="InterPro" id="IPR015928">
    <property type="entry name" value="Aconitase/3IPM_dehydase_swvl"/>
</dbReference>
<dbReference type="InterPro" id="IPR000573">
    <property type="entry name" value="AconitaseA/IPMdHydase_ssu_swvl"/>
</dbReference>
<dbReference type="InterPro" id="IPR033940">
    <property type="entry name" value="IPMI_Swivel"/>
</dbReference>
<dbReference type="InterPro" id="IPR050075">
    <property type="entry name" value="LeuD"/>
</dbReference>
<dbReference type="NCBIfam" id="TIGR00171">
    <property type="entry name" value="leuD"/>
    <property type="match status" value="1"/>
</dbReference>
<dbReference type="NCBIfam" id="NF002458">
    <property type="entry name" value="PRK01641.1"/>
    <property type="match status" value="1"/>
</dbReference>
<dbReference type="PANTHER" id="PTHR43345:SF5">
    <property type="entry name" value="3-ISOPROPYLMALATE DEHYDRATASE SMALL SUBUNIT"/>
    <property type="match status" value="1"/>
</dbReference>
<dbReference type="PANTHER" id="PTHR43345">
    <property type="entry name" value="3-ISOPROPYLMALATE DEHYDRATASE SMALL SUBUNIT 2-RELATED-RELATED"/>
    <property type="match status" value="1"/>
</dbReference>
<dbReference type="Pfam" id="PF00694">
    <property type="entry name" value="Aconitase_C"/>
    <property type="match status" value="1"/>
</dbReference>
<dbReference type="SUPFAM" id="SSF52016">
    <property type="entry name" value="LeuD/IlvD-like"/>
    <property type="match status" value="1"/>
</dbReference>
<comment type="function">
    <text evidence="1">Catalyzes the isomerization between 2-isopropylmalate and 3-isopropylmalate, via the formation of 2-isopropylmaleate.</text>
</comment>
<comment type="catalytic activity">
    <reaction evidence="1">
        <text>(2R,3S)-3-isopropylmalate = (2S)-2-isopropylmalate</text>
        <dbReference type="Rhea" id="RHEA:32287"/>
        <dbReference type="ChEBI" id="CHEBI:1178"/>
        <dbReference type="ChEBI" id="CHEBI:35121"/>
        <dbReference type="EC" id="4.2.1.33"/>
    </reaction>
</comment>
<comment type="pathway">
    <text evidence="1">Amino-acid biosynthesis; L-leucine biosynthesis; L-leucine from 3-methyl-2-oxobutanoate: step 2/4.</text>
</comment>
<comment type="subunit">
    <text evidence="1">Heterodimer of LeuC and LeuD.</text>
</comment>
<comment type="similarity">
    <text evidence="1">Belongs to the LeuD family. LeuD type 1 subfamily.</text>
</comment>
<proteinExistence type="inferred from homology"/>
<sequence length="215" mass="24371">MKAYTVEQGIVAPLDRANVDTDLIIPKQFLKSIKRTGFGDNLFDELRYLDEGYPGQDNSVRPKNPDFVLNQPRYQGATVLIARTNFGCGSSREHAPWALNEYGFRTVIAPSFADIFFNNCFKNGMLPVILPEDIVDQLFKECAAQEGYQLTIDLAAQEVRTPTGEAFKFEVDPFRKHCLLNGLDDIGLTLQNADAIRAYEEKTKQVRPWVFQEIN</sequence>
<protein>
    <recommendedName>
        <fullName evidence="1">3-isopropylmalate dehydratase small subunit</fullName>
        <ecNumber evidence="1">4.2.1.33</ecNumber>
    </recommendedName>
    <alternativeName>
        <fullName evidence="1">Alpha-IPM isomerase</fullName>
        <shortName evidence="1">IPMI</shortName>
    </alternativeName>
    <alternativeName>
        <fullName evidence="1">Isopropylmalate isomerase</fullName>
    </alternativeName>
</protein>
<accession>B2I360</accession>
<evidence type="ECO:0000255" key="1">
    <source>
        <dbReference type="HAMAP-Rule" id="MF_01031"/>
    </source>
</evidence>
<feature type="chain" id="PRO_1000135778" description="3-isopropylmalate dehydratase small subunit">
    <location>
        <begin position="1"/>
        <end position="215"/>
    </location>
</feature>